<reference key="1">
    <citation type="journal article" date="2001" name="Science">
        <title>The genome of the natural genetic engineer Agrobacterium tumefaciens C58.</title>
        <authorList>
            <person name="Wood D.W."/>
            <person name="Setubal J.C."/>
            <person name="Kaul R."/>
            <person name="Monks D.E."/>
            <person name="Kitajima J.P."/>
            <person name="Okura V.K."/>
            <person name="Zhou Y."/>
            <person name="Chen L."/>
            <person name="Wood G.E."/>
            <person name="Almeida N.F. Jr."/>
            <person name="Woo L."/>
            <person name="Chen Y."/>
            <person name="Paulsen I.T."/>
            <person name="Eisen J.A."/>
            <person name="Karp P.D."/>
            <person name="Bovee D. Sr."/>
            <person name="Chapman P."/>
            <person name="Clendenning J."/>
            <person name="Deatherage G."/>
            <person name="Gillet W."/>
            <person name="Grant C."/>
            <person name="Kutyavin T."/>
            <person name="Levy R."/>
            <person name="Li M.-J."/>
            <person name="McClelland E."/>
            <person name="Palmieri A."/>
            <person name="Raymond C."/>
            <person name="Rouse G."/>
            <person name="Saenphimmachak C."/>
            <person name="Wu Z."/>
            <person name="Romero P."/>
            <person name="Gordon D."/>
            <person name="Zhang S."/>
            <person name="Yoo H."/>
            <person name="Tao Y."/>
            <person name="Biddle P."/>
            <person name="Jung M."/>
            <person name="Krespan W."/>
            <person name="Perry M."/>
            <person name="Gordon-Kamm B."/>
            <person name="Liao L."/>
            <person name="Kim S."/>
            <person name="Hendrick C."/>
            <person name="Zhao Z.-Y."/>
            <person name="Dolan M."/>
            <person name="Chumley F."/>
            <person name="Tingey S.V."/>
            <person name="Tomb J.-F."/>
            <person name="Gordon M.P."/>
            <person name="Olson M.V."/>
            <person name="Nester E.W."/>
        </authorList>
    </citation>
    <scope>NUCLEOTIDE SEQUENCE [LARGE SCALE GENOMIC DNA]</scope>
    <source>
        <strain>C58 / ATCC 33970</strain>
    </source>
</reference>
<reference key="2">
    <citation type="journal article" date="2001" name="Science">
        <title>Genome sequence of the plant pathogen and biotechnology agent Agrobacterium tumefaciens C58.</title>
        <authorList>
            <person name="Goodner B."/>
            <person name="Hinkle G."/>
            <person name="Gattung S."/>
            <person name="Miller N."/>
            <person name="Blanchard M."/>
            <person name="Qurollo B."/>
            <person name="Goldman B.S."/>
            <person name="Cao Y."/>
            <person name="Askenazi M."/>
            <person name="Halling C."/>
            <person name="Mullin L."/>
            <person name="Houmiel K."/>
            <person name="Gordon J."/>
            <person name="Vaudin M."/>
            <person name="Iartchouk O."/>
            <person name="Epp A."/>
            <person name="Liu F."/>
            <person name="Wollam C."/>
            <person name="Allinger M."/>
            <person name="Doughty D."/>
            <person name="Scott C."/>
            <person name="Lappas C."/>
            <person name="Markelz B."/>
            <person name="Flanagan C."/>
            <person name="Crowell C."/>
            <person name="Gurson J."/>
            <person name="Lomo C."/>
            <person name="Sear C."/>
            <person name="Strub G."/>
            <person name="Cielo C."/>
            <person name="Slater S."/>
        </authorList>
    </citation>
    <scope>NUCLEOTIDE SEQUENCE [LARGE SCALE GENOMIC DNA]</scope>
    <source>
        <strain>C58 / ATCC 33970</strain>
    </source>
</reference>
<comment type="function">
    <text evidence="1">Catalyzes the acyloin condensation reaction between C atoms 2 and 3 of pyruvate and glyceraldehyde 3-phosphate to yield 1-deoxy-D-xylulose-5-phosphate (DXP).</text>
</comment>
<comment type="catalytic activity">
    <reaction evidence="1">
        <text>D-glyceraldehyde 3-phosphate + pyruvate + H(+) = 1-deoxy-D-xylulose 5-phosphate + CO2</text>
        <dbReference type="Rhea" id="RHEA:12605"/>
        <dbReference type="ChEBI" id="CHEBI:15361"/>
        <dbReference type="ChEBI" id="CHEBI:15378"/>
        <dbReference type="ChEBI" id="CHEBI:16526"/>
        <dbReference type="ChEBI" id="CHEBI:57792"/>
        <dbReference type="ChEBI" id="CHEBI:59776"/>
        <dbReference type="EC" id="2.2.1.7"/>
    </reaction>
</comment>
<comment type="cofactor">
    <cofactor evidence="1">
        <name>Mg(2+)</name>
        <dbReference type="ChEBI" id="CHEBI:18420"/>
    </cofactor>
    <text evidence="1">Binds 1 Mg(2+) ion per subunit.</text>
</comment>
<comment type="cofactor">
    <cofactor evidence="1">
        <name>thiamine diphosphate</name>
        <dbReference type="ChEBI" id="CHEBI:58937"/>
    </cofactor>
    <text evidence="1">Binds 1 thiamine pyrophosphate per subunit.</text>
</comment>
<comment type="pathway">
    <text evidence="1">Metabolic intermediate biosynthesis; 1-deoxy-D-xylulose 5-phosphate biosynthesis; 1-deoxy-D-xylulose 5-phosphate from D-glyceraldehyde 3-phosphate and pyruvate: step 1/1.</text>
</comment>
<comment type="subunit">
    <text evidence="1">Homodimer.</text>
</comment>
<comment type="similarity">
    <text evidence="1">Belongs to the transketolase family. DXPS subfamily.</text>
</comment>
<feature type="chain" id="PRO_0000189080" description="1-deoxy-D-xylulose-5-phosphate synthase">
    <location>
        <begin position="1"/>
        <end position="639"/>
    </location>
</feature>
<feature type="binding site" evidence="1">
    <location>
        <position position="79"/>
    </location>
    <ligand>
        <name>thiamine diphosphate</name>
        <dbReference type="ChEBI" id="CHEBI:58937"/>
    </ligand>
</feature>
<feature type="binding site" evidence="1">
    <location>
        <begin position="120"/>
        <end position="122"/>
    </location>
    <ligand>
        <name>thiamine diphosphate</name>
        <dbReference type="ChEBI" id="CHEBI:58937"/>
    </ligand>
</feature>
<feature type="binding site" evidence="1">
    <location>
        <position position="151"/>
    </location>
    <ligand>
        <name>Mg(2+)</name>
        <dbReference type="ChEBI" id="CHEBI:18420"/>
    </ligand>
</feature>
<feature type="binding site" evidence="1">
    <location>
        <begin position="152"/>
        <end position="153"/>
    </location>
    <ligand>
        <name>thiamine diphosphate</name>
        <dbReference type="ChEBI" id="CHEBI:58937"/>
    </ligand>
</feature>
<feature type="binding site" evidence="1">
    <location>
        <position position="180"/>
    </location>
    <ligand>
        <name>Mg(2+)</name>
        <dbReference type="ChEBI" id="CHEBI:18420"/>
    </ligand>
</feature>
<feature type="binding site" evidence="1">
    <location>
        <position position="180"/>
    </location>
    <ligand>
        <name>thiamine diphosphate</name>
        <dbReference type="ChEBI" id="CHEBI:58937"/>
    </ligand>
</feature>
<feature type="binding site" evidence="1">
    <location>
        <position position="289"/>
    </location>
    <ligand>
        <name>thiamine diphosphate</name>
        <dbReference type="ChEBI" id="CHEBI:58937"/>
    </ligand>
</feature>
<feature type="binding site" evidence="1">
    <location>
        <position position="371"/>
    </location>
    <ligand>
        <name>thiamine diphosphate</name>
        <dbReference type="ChEBI" id="CHEBI:58937"/>
    </ligand>
</feature>
<sequence length="639" mass="68116">MTGMPQTPLLDRVNFPSDLKEIDDRDLPELARELRDEMIDAVSKTGGHLGAGLGVVELTIAIHKVFNTPEDRLIFDVGHQCYPHKILTGRRDRIRTLRQEDGLSGFTRRAESEYDDFGAGHSSTSISAGLGMAVAAGLDGSDRKVIAVIGDGSMSAGMAFEALNNAGALDARLIVILNDNDMSIAPPTGAMSAYLARLASGRTYMGFRDFGKKLTAYLGKTIDRAITRAVTHARGYVTGGTLFEELGFYHIGPIDGHSFDHLLPVLRNVRDNQKGPVLIHVVTQKGKGYAPAEAAADKYHGVNKFDVITGAQAKAKPNAPSYTSVFAEALIQEATLDEKIIGVTAAMPNGTGLDKMAELFPSRTFDVGIAEQHAVTFAAGLAADGYKPFCALYSTFLQRGYDQLVHDVAIQSLPVRFPIDRAGFVGADGPTHAGSFDTTFLATLPGMVVMAAADEAELKHMVRTAAAYDEGPISFRYPRGEGVGVEMPARGEILQIGKGRIIKEGTKVALLSFGTRLAECLAAAEDLDAAGLSTTVADARFAKPLDLDLIRQLAAHHEVLVTIEEGSVGGFGAHVLHFMASAGLLDHGPKVRTLTLPDQWVEQAKPETMYANAGLDRAGIVSTVFNALGQRQAGVGFAG</sequence>
<dbReference type="EC" id="2.2.1.7" evidence="1"/>
<dbReference type="EMBL" id="AE007869">
    <property type="protein sequence ID" value="AAK86554.1"/>
    <property type="molecule type" value="Genomic_DNA"/>
</dbReference>
<dbReference type="PIR" id="A97450">
    <property type="entry name" value="A97450"/>
</dbReference>
<dbReference type="PIR" id="AC2668">
    <property type="entry name" value="AC2668"/>
</dbReference>
<dbReference type="RefSeq" id="NP_353769.1">
    <property type="nucleotide sequence ID" value="NC_003062.2"/>
</dbReference>
<dbReference type="RefSeq" id="WP_010971117.1">
    <property type="nucleotide sequence ID" value="NC_003062.2"/>
</dbReference>
<dbReference type="SMR" id="Q8UHD7"/>
<dbReference type="STRING" id="176299.Atu0745"/>
<dbReference type="EnsemblBacteria" id="AAK86554">
    <property type="protein sequence ID" value="AAK86554"/>
    <property type="gene ID" value="Atu0745"/>
</dbReference>
<dbReference type="GeneID" id="1132783"/>
<dbReference type="KEGG" id="atu:Atu0745"/>
<dbReference type="PATRIC" id="fig|176299.10.peg.742"/>
<dbReference type="eggNOG" id="COG1154">
    <property type="taxonomic scope" value="Bacteria"/>
</dbReference>
<dbReference type="HOGENOM" id="CLU_009227_1_4_5"/>
<dbReference type="OrthoDB" id="9803371at2"/>
<dbReference type="PhylomeDB" id="Q8UHD7"/>
<dbReference type="BioCyc" id="AGRO:ATU0745-MONOMER"/>
<dbReference type="UniPathway" id="UPA00064">
    <property type="reaction ID" value="UER00091"/>
</dbReference>
<dbReference type="Proteomes" id="UP000000813">
    <property type="component" value="Chromosome circular"/>
</dbReference>
<dbReference type="GO" id="GO:0008661">
    <property type="term" value="F:1-deoxy-D-xylulose-5-phosphate synthase activity"/>
    <property type="evidence" value="ECO:0007669"/>
    <property type="project" value="UniProtKB-UniRule"/>
</dbReference>
<dbReference type="GO" id="GO:0000287">
    <property type="term" value="F:magnesium ion binding"/>
    <property type="evidence" value="ECO:0007669"/>
    <property type="project" value="UniProtKB-UniRule"/>
</dbReference>
<dbReference type="GO" id="GO:0030976">
    <property type="term" value="F:thiamine pyrophosphate binding"/>
    <property type="evidence" value="ECO:0007669"/>
    <property type="project" value="UniProtKB-UniRule"/>
</dbReference>
<dbReference type="GO" id="GO:0052865">
    <property type="term" value="P:1-deoxy-D-xylulose 5-phosphate biosynthetic process"/>
    <property type="evidence" value="ECO:0007669"/>
    <property type="project" value="UniProtKB-UniPathway"/>
</dbReference>
<dbReference type="GO" id="GO:0019682">
    <property type="term" value="P:glyceraldehyde-3-phosphate metabolic process"/>
    <property type="evidence" value="ECO:0007669"/>
    <property type="project" value="UniProtKB-ARBA"/>
</dbReference>
<dbReference type="GO" id="GO:0016114">
    <property type="term" value="P:terpenoid biosynthetic process"/>
    <property type="evidence" value="ECO:0007669"/>
    <property type="project" value="UniProtKB-UniRule"/>
</dbReference>
<dbReference type="GO" id="GO:0009228">
    <property type="term" value="P:thiamine biosynthetic process"/>
    <property type="evidence" value="ECO:0007669"/>
    <property type="project" value="UniProtKB-UniRule"/>
</dbReference>
<dbReference type="CDD" id="cd02007">
    <property type="entry name" value="TPP_DXS"/>
    <property type="match status" value="1"/>
</dbReference>
<dbReference type="CDD" id="cd07033">
    <property type="entry name" value="TPP_PYR_DXS_TK_like"/>
    <property type="match status" value="1"/>
</dbReference>
<dbReference type="FunFam" id="3.40.50.920:FF:000002">
    <property type="entry name" value="1-deoxy-D-xylulose-5-phosphate synthase"/>
    <property type="match status" value="1"/>
</dbReference>
<dbReference type="FunFam" id="3.40.50.970:FF:000005">
    <property type="entry name" value="1-deoxy-D-xylulose-5-phosphate synthase"/>
    <property type="match status" value="1"/>
</dbReference>
<dbReference type="Gene3D" id="3.40.50.920">
    <property type="match status" value="1"/>
</dbReference>
<dbReference type="Gene3D" id="3.40.50.970">
    <property type="match status" value="2"/>
</dbReference>
<dbReference type="HAMAP" id="MF_00315">
    <property type="entry name" value="DXP_synth"/>
    <property type="match status" value="1"/>
</dbReference>
<dbReference type="InterPro" id="IPR005477">
    <property type="entry name" value="Dxylulose-5-P_synthase"/>
</dbReference>
<dbReference type="InterPro" id="IPR029061">
    <property type="entry name" value="THDP-binding"/>
</dbReference>
<dbReference type="InterPro" id="IPR009014">
    <property type="entry name" value="Transketo_C/PFOR_II"/>
</dbReference>
<dbReference type="InterPro" id="IPR005475">
    <property type="entry name" value="Transketolase-like_Pyr-bd"/>
</dbReference>
<dbReference type="InterPro" id="IPR020826">
    <property type="entry name" value="Transketolase_BS"/>
</dbReference>
<dbReference type="InterPro" id="IPR033248">
    <property type="entry name" value="Transketolase_C"/>
</dbReference>
<dbReference type="InterPro" id="IPR049557">
    <property type="entry name" value="Transketolase_CS"/>
</dbReference>
<dbReference type="NCBIfam" id="TIGR00204">
    <property type="entry name" value="dxs"/>
    <property type="match status" value="1"/>
</dbReference>
<dbReference type="NCBIfam" id="NF003933">
    <property type="entry name" value="PRK05444.2-2"/>
    <property type="match status" value="1"/>
</dbReference>
<dbReference type="PANTHER" id="PTHR43322">
    <property type="entry name" value="1-D-DEOXYXYLULOSE 5-PHOSPHATE SYNTHASE-RELATED"/>
    <property type="match status" value="1"/>
</dbReference>
<dbReference type="PANTHER" id="PTHR43322:SF5">
    <property type="entry name" value="1-DEOXY-D-XYLULOSE-5-PHOSPHATE SYNTHASE, CHLOROPLASTIC"/>
    <property type="match status" value="1"/>
</dbReference>
<dbReference type="Pfam" id="PF13292">
    <property type="entry name" value="DXP_synthase_N"/>
    <property type="match status" value="1"/>
</dbReference>
<dbReference type="Pfam" id="PF02779">
    <property type="entry name" value="Transket_pyr"/>
    <property type="match status" value="1"/>
</dbReference>
<dbReference type="Pfam" id="PF02780">
    <property type="entry name" value="Transketolase_C"/>
    <property type="match status" value="1"/>
</dbReference>
<dbReference type="SMART" id="SM00861">
    <property type="entry name" value="Transket_pyr"/>
    <property type="match status" value="1"/>
</dbReference>
<dbReference type="SUPFAM" id="SSF52518">
    <property type="entry name" value="Thiamin diphosphate-binding fold (THDP-binding)"/>
    <property type="match status" value="2"/>
</dbReference>
<dbReference type="SUPFAM" id="SSF52922">
    <property type="entry name" value="TK C-terminal domain-like"/>
    <property type="match status" value="1"/>
</dbReference>
<dbReference type="PROSITE" id="PS00801">
    <property type="entry name" value="TRANSKETOLASE_1"/>
    <property type="match status" value="1"/>
</dbReference>
<dbReference type="PROSITE" id="PS00802">
    <property type="entry name" value="TRANSKETOLASE_2"/>
    <property type="match status" value="1"/>
</dbReference>
<protein>
    <recommendedName>
        <fullName evidence="1">1-deoxy-D-xylulose-5-phosphate synthase</fullName>
        <ecNumber evidence="1">2.2.1.7</ecNumber>
    </recommendedName>
    <alternativeName>
        <fullName evidence="1">1-deoxyxylulose-5-phosphate synthase</fullName>
        <shortName evidence="1">DXP synthase</shortName>
        <shortName evidence="1">DXPS</shortName>
    </alternativeName>
</protein>
<evidence type="ECO:0000255" key="1">
    <source>
        <dbReference type="HAMAP-Rule" id="MF_00315"/>
    </source>
</evidence>
<organism>
    <name type="scientific">Agrobacterium fabrum (strain C58 / ATCC 33970)</name>
    <name type="common">Agrobacterium tumefaciens (strain C58)</name>
    <dbReference type="NCBI Taxonomy" id="176299"/>
    <lineage>
        <taxon>Bacteria</taxon>
        <taxon>Pseudomonadati</taxon>
        <taxon>Pseudomonadota</taxon>
        <taxon>Alphaproteobacteria</taxon>
        <taxon>Hyphomicrobiales</taxon>
        <taxon>Rhizobiaceae</taxon>
        <taxon>Rhizobium/Agrobacterium group</taxon>
        <taxon>Agrobacterium</taxon>
        <taxon>Agrobacterium tumefaciens complex</taxon>
    </lineage>
</organism>
<proteinExistence type="inferred from homology"/>
<keyword id="KW-0414">Isoprene biosynthesis</keyword>
<keyword id="KW-0460">Magnesium</keyword>
<keyword id="KW-0479">Metal-binding</keyword>
<keyword id="KW-1185">Reference proteome</keyword>
<keyword id="KW-0784">Thiamine biosynthesis</keyword>
<keyword id="KW-0786">Thiamine pyrophosphate</keyword>
<keyword id="KW-0808">Transferase</keyword>
<accession>Q8UHD7</accession>
<gene>
    <name evidence="1" type="primary">dxs</name>
    <name type="ordered locus">Atu0745</name>
    <name type="ORF">AGR_C_1351</name>
</gene>
<name>DXS_AGRFC</name>